<comment type="function">
    <text evidence="1">Specifically methylates the pseudouridine at position 1915 (m3Psi1915) in 23S rRNA.</text>
</comment>
<comment type="catalytic activity">
    <reaction evidence="1">
        <text>pseudouridine(1915) in 23S rRNA + S-adenosyl-L-methionine = N(3)-methylpseudouridine(1915) in 23S rRNA + S-adenosyl-L-homocysteine + H(+)</text>
        <dbReference type="Rhea" id="RHEA:42752"/>
        <dbReference type="Rhea" id="RHEA-COMP:10221"/>
        <dbReference type="Rhea" id="RHEA-COMP:10222"/>
        <dbReference type="ChEBI" id="CHEBI:15378"/>
        <dbReference type="ChEBI" id="CHEBI:57856"/>
        <dbReference type="ChEBI" id="CHEBI:59789"/>
        <dbReference type="ChEBI" id="CHEBI:65314"/>
        <dbReference type="ChEBI" id="CHEBI:74486"/>
        <dbReference type="EC" id="2.1.1.177"/>
    </reaction>
</comment>
<comment type="subunit">
    <text evidence="1">Homodimer.</text>
</comment>
<comment type="subcellular location">
    <subcellularLocation>
        <location evidence="1">Cytoplasm</location>
    </subcellularLocation>
</comment>
<comment type="similarity">
    <text evidence="1">Belongs to the RNA methyltransferase RlmH family.</text>
</comment>
<feature type="chain" id="PRO_0000260539" description="Ribosomal RNA large subunit methyltransferase H">
    <location>
        <begin position="1"/>
        <end position="156"/>
    </location>
</feature>
<feature type="binding site" evidence="1">
    <location>
        <position position="73"/>
    </location>
    <ligand>
        <name>S-adenosyl-L-methionine</name>
        <dbReference type="ChEBI" id="CHEBI:59789"/>
    </ligand>
</feature>
<feature type="binding site" evidence="1">
    <location>
        <position position="104"/>
    </location>
    <ligand>
        <name>S-adenosyl-L-methionine</name>
        <dbReference type="ChEBI" id="CHEBI:59789"/>
    </ligand>
</feature>
<feature type="binding site" evidence="1">
    <location>
        <begin position="123"/>
        <end position="128"/>
    </location>
    <ligand>
        <name>S-adenosyl-L-methionine</name>
        <dbReference type="ChEBI" id="CHEBI:59789"/>
    </ligand>
</feature>
<organism>
    <name type="scientific">Burkholderia pseudomallei (strain 1710b)</name>
    <dbReference type="NCBI Taxonomy" id="320372"/>
    <lineage>
        <taxon>Bacteria</taxon>
        <taxon>Pseudomonadati</taxon>
        <taxon>Pseudomonadota</taxon>
        <taxon>Betaproteobacteria</taxon>
        <taxon>Burkholderiales</taxon>
        <taxon>Burkholderiaceae</taxon>
        <taxon>Burkholderia</taxon>
        <taxon>pseudomallei group</taxon>
    </lineage>
</organism>
<evidence type="ECO:0000255" key="1">
    <source>
        <dbReference type="HAMAP-Rule" id="MF_00658"/>
    </source>
</evidence>
<sequence length="156" mass="17427">MKLHIVAVGHKMPGWIASGFDEYAKRMPPELRIELREVKPELRSGSRTADSVMAAEQQRIEAALPKNARVVALDERGRDWTTMQLAQALPAWQQDGRDVAFVIGGADGLAPALKSRAELLLRVSSLTLPHGMVRVLLAEQLYRAWSITQNHPYHRA</sequence>
<reference key="1">
    <citation type="journal article" date="2010" name="Genome Biol. Evol.">
        <title>Continuing evolution of Burkholderia mallei through genome reduction and large-scale rearrangements.</title>
        <authorList>
            <person name="Losada L."/>
            <person name="Ronning C.M."/>
            <person name="DeShazer D."/>
            <person name="Woods D."/>
            <person name="Fedorova N."/>
            <person name="Kim H.S."/>
            <person name="Shabalina S.A."/>
            <person name="Pearson T.R."/>
            <person name="Brinkac L."/>
            <person name="Tan P."/>
            <person name="Nandi T."/>
            <person name="Crabtree J."/>
            <person name="Badger J."/>
            <person name="Beckstrom-Sternberg S."/>
            <person name="Saqib M."/>
            <person name="Schutzer S.E."/>
            <person name="Keim P."/>
            <person name="Nierman W.C."/>
        </authorList>
    </citation>
    <scope>NUCLEOTIDE SEQUENCE [LARGE SCALE GENOMIC DNA]</scope>
    <source>
        <strain>1710b</strain>
    </source>
</reference>
<name>RLMH_BURP1</name>
<proteinExistence type="inferred from homology"/>
<dbReference type="EC" id="2.1.1.177" evidence="1"/>
<dbReference type="EMBL" id="CP000124">
    <property type="protein sequence ID" value="ABA50738.1"/>
    <property type="molecule type" value="Genomic_DNA"/>
</dbReference>
<dbReference type="RefSeq" id="WP_004186098.1">
    <property type="nucleotide sequence ID" value="NC_007434.1"/>
</dbReference>
<dbReference type="SMR" id="Q3JUG4"/>
<dbReference type="EnsemblBacteria" id="ABA50738">
    <property type="protein sequence ID" value="ABA50738"/>
    <property type="gene ID" value="BURPS1710b_1379"/>
</dbReference>
<dbReference type="GeneID" id="93059640"/>
<dbReference type="KEGG" id="bpm:BURPS1710b_1379"/>
<dbReference type="HOGENOM" id="CLU_100552_1_0_4"/>
<dbReference type="Proteomes" id="UP000002700">
    <property type="component" value="Chromosome I"/>
</dbReference>
<dbReference type="GO" id="GO:0005737">
    <property type="term" value="C:cytoplasm"/>
    <property type="evidence" value="ECO:0007669"/>
    <property type="project" value="UniProtKB-SubCell"/>
</dbReference>
<dbReference type="GO" id="GO:0070038">
    <property type="term" value="F:rRNA (pseudouridine-N3-)-methyltransferase activity"/>
    <property type="evidence" value="ECO:0007669"/>
    <property type="project" value="UniProtKB-UniRule"/>
</dbReference>
<dbReference type="CDD" id="cd18081">
    <property type="entry name" value="RlmH-like"/>
    <property type="match status" value="1"/>
</dbReference>
<dbReference type="Gene3D" id="3.40.1280.10">
    <property type="match status" value="1"/>
</dbReference>
<dbReference type="HAMAP" id="MF_00658">
    <property type="entry name" value="23SrRNA_methyltr_H"/>
    <property type="match status" value="1"/>
</dbReference>
<dbReference type="InterPro" id="IPR029028">
    <property type="entry name" value="Alpha/beta_knot_MTases"/>
</dbReference>
<dbReference type="InterPro" id="IPR003742">
    <property type="entry name" value="RlmH-like"/>
</dbReference>
<dbReference type="InterPro" id="IPR029026">
    <property type="entry name" value="tRNA_m1G_MTases_N"/>
</dbReference>
<dbReference type="NCBIfam" id="NF000986">
    <property type="entry name" value="PRK00103.1-4"/>
    <property type="match status" value="1"/>
</dbReference>
<dbReference type="NCBIfam" id="TIGR00246">
    <property type="entry name" value="tRNA_RlmH_YbeA"/>
    <property type="match status" value="1"/>
</dbReference>
<dbReference type="PANTHER" id="PTHR33603">
    <property type="entry name" value="METHYLTRANSFERASE"/>
    <property type="match status" value="1"/>
</dbReference>
<dbReference type="PANTHER" id="PTHR33603:SF1">
    <property type="entry name" value="RIBOSOMAL RNA LARGE SUBUNIT METHYLTRANSFERASE H"/>
    <property type="match status" value="1"/>
</dbReference>
<dbReference type="Pfam" id="PF02590">
    <property type="entry name" value="SPOUT_MTase"/>
    <property type="match status" value="1"/>
</dbReference>
<dbReference type="PIRSF" id="PIRSF004505">
    <property type="entry name" value="MT_bac"/>
    <property type="match status" value="1"/>
</dbReference>
<dbReference type="SUPFAM" id="SSF75217">
    <property type="entry name" value="alpha/beta knot"/>
    <property type="match status" value="1"/>
</dbReference>
<accession>Q3JUG4</accession>
<gene>
    <name evidence="1" type="primary">rlmH</name>
    <name type="ordered locus">BURPS1710b_1379</name>
</gene>
<keyword id="KW-0963">Cytoplasm</keyword>
<keyword id="KW-0489">Methyltransferase</keyword>
<keyword id="KW-0698">rRNA processing</keyword>
<keyword id="KW-0949">S-adenosyl-L-methionine</keyword>
<keyword id="KW-0808">Transferase</keyword>
<protein>
    <recommendedName>
        <fullName evidence="1">Ribosomal RNA large subunit methyltransferase H</fullName>
        <ecNumber evidence="1">2.1.1.177</ecNumber>
    </recommendedName>
    <alternativeName>
        <fullName evidence="1">23S rRNA (pseudouridine1915-N3)-methyltransferase</fullName>
    </alternativeName>
    <alternativeName>
        <fullName evidence="1">23S rRNA m3Psi1915 methyltransferase</fullName>
    </alternativeName>
    <alternativeName>
        <fullName evidence="1">rRNA (pseudouridine-N3-)-methyltransferase RlmH</fullName>
    </alternativeName>
</protein>